<organism>
    <name type="scientific">Brucella suis biovar 1 (strain 1330)</name>
    <dbReference type="NCBI Taxonomy" id="204722"/>
    <lineage>
        <taxon>Bacteria</taxon>
        <taxon>Pseudomonadati</taxon>
        <taxon>Pseudomonadota</taxon>
        <taxon>Alphaproteobacteria</taxon>
        <taxon>Hyphomicrobiales</taxon>
        <taxon>Brucellaceae</taxon>
        <taxon>Brucella/Ochrobactrum group</taxon>
        <taxon>Brucella</taxon>
    </lineage>
</organism>
<comment type="function">
    <text evidence="1">One of the essential components for the initiation of protein synthesis. Stabilizes the binding of IF-2 and IF-3 on the 30S subunit to which N-formylmethionyl-tRNA(fMet) subsequently binds. Helps modulate mRNA selection, yielding the 30S pre-initiation complex (PIC). Upon addition of the 50S ribosomal subunit IF-1, IF-2 and IF-3 are released leaving the mature 70S translation initiation complex.</text>
</comment>
<comment type="subunit">
    <text evidence="1">Component of the 30S ribosomal translation pre-initiation complex which assembles on the 30S ribosome in the order IF-2 and IF-3, IF-1 and N-formylmethionyl-tRNA(fMet); mRNA recruitment can occur at any time during PIC assembly.</text>
</comment>
<comment type="subcellular location">
    <subcellularLocation>
        <location evidence="1">Cytoplasm</location>
    </subcellularLocation>
</comment>
<comment type="similarity">
    <text evidence="1">Belongs to the IF-1 family.</text>
</comment>
<proteinExistence type="inferred from homology"/>
<accession>Q8G2R5</accession>
<accession>G0KBU8</accession>
<name>IF1_BRUSU</name>
<sequence>MAKEEVLEFPGVVTELLPNAMFRVKLENEHEIIAHTAGRMRKNRIRVLAGDKVLVEMTPYDLTKGRITYRLK</sequence>
<evidence type="ECO:0000255" key="1">
    <source>
        <dbReference type="HAMAP-Rule" id="MF_00075"/>
    </source>
</evidence>
<reference key="1">
    <citation type="journal article" date="2002" name="Proc. Natl. Acad. Sci. U.S.A.">
        <title>The Brucella suis genome reveals fundamental similarities between animal and plant pathogens and symbionts.</title>
        <authorList>
            <person name="Paulsen I.T."/>
            <person name="Seshadri R."/>
            <person name="Nelson K.E."/>
            <person name="Eisen J.A."/>
            <person name="Heidelberg J.F."/>
            <person name="Read T.D."/>
            <person name="Dodson R.J."/>
            <person name="Umayam L.A."/>
            <person name="Brinkac L.M."/>
            <person name="Beanan M.J."/>
            <person name="Daugherty S.C."/>
            <person name="DeBoy R.T."/>
            <person name="Durkin A.S."/>
            <person name="Kolonay J.F."/>
            <person name="Madupu R."/>
            <person name="Nelson W.C."/>
            <person name="Ayodeji B."/>
            <person name="Kraul M."/>
            <person name="Shetty J."/>
            <person name="Malek J.A."/>
            <person name="Van Aken S.E."/>
            <person name="Riedmuller S."/>
            <person name="Tettelin H."/>
            <person name="Gill S.R."/>
            <person name="White O."/>
            <person name="Salzberg S.L."/>
            <person name="Hoover D.L."/>
            <person name="Lindler L.E."/>
            <person name="Halling S.M."/>
            <person name="Boyle S.M."/>
            <person name="Fraser C.M."/>
        </authorList>
    </citation>
    <scope>NUCLEOTIDE SEQUENCE [LARGE SCALE GENOMIC DNA]</scope>
    <source>
        <strain>1330</strain>
    </source>
</reference>
<reference key="2">
    <citation type="journal article" date="2011" name="J. Bacteriol.">
        <title>Revised genome sequence of Brucella suis 1330.</title>
        <authorList>
            <person name="Tae H."/>
            <person name="Shallom S."/>
            <person name="Settlage R."/>
            <person name="Preston D."/>
            <person name="Adams L.G."/>
            <person name="Garner H.R."/>
        </authorList>
    </citation>
    <scope>NUCLEOTIDE SEQUENCE [LARGE SCALE GENOMIC DNA]</scope>
    <source>
        <strain>1330</strain>
    </source>
</reference>
<feature type="chain" id="PRO_0000095755" description="Translation initiation factor IF-1">
    <location>
        <begin position="1"/>
        <end position="72"/>
    </location>
</feature>
<feature type="domain" description="S1-like" evidence="1">
    <location>
        <begin position="1"/>
        <end position="72"/>
    </location>
</feature>
<gene>
    <name evidence="1" type="primary">infA</name>
    <name type="ordered locus">BR0249</name>
    <name type="ordered locus">BS1330_I0250</name>
</gene>
<dbReference type="EMBL" id="AE014291">
    <property type="protein sequence ID" value="AAN29198.1"/>
    <property type="molecule type" value="Genomic_DNA"/>
</dbReference>
<dbReference type="EMBL" id="CP002997">
    <property type="protein sequence ID" value="AEM17611.1"/>
    <property type="molecule type" value="Genomic_DNA"/>
</dbReference>
<dbReference type="RefSeq" id="WP_004691460.1">
    <property type="nucleotide sequence ID" value="NZ_KN046804.1"/>
</dbReference>
<dbReference type="SMR" id="Q8G2R5"/>
<dbReference type="GeneID" id="55590032"/>
<dbReference type="KEGG" id="bms:BR0249"/>
<dbReference type="KEGG" id="bsi:BS1330_I0250"/>
<dbReference type="PATRIC" id="fig|204722.21.peg.1038"/>
<dbReference type="HOGENOM" id="CLU_151267_1_0_5"/>
<dbReference type="Proteomes" id="UP000007104">
    <property type="component" value="Chromosome I"/>
</dbReference>
<dbReference type="GO" id="GO:0005829">
    <property type="term" value="C:cytosol"/>
    <property type="evidence" value="ECO:0007669"/>
    <property type="project" value="TreeGrafter"/>
</dbReference>
<dbReference type="GO" id="GO:0043022">
    <property type="term" value="F:ribosome binding"/>
    <property type="evidence" value="ECO:0007669"/>
    <property type="project" value="UniProtKB-UniRule"/>
</dbReference>
<dbReference type="GO" id="GO:0019843">
    <property type="term" value="F:rRNA binding"/>
    <property type="evidence" value="ECO:0007669"/>
    <property type="project" value="UniProtKB-UniRule"/>
</dbReference>
<dbReference type="GO" id="GO:0003743">
    <property type="term" value="F:translation initiation factor activity"/>
    <property type="evidence" value="ECO:0007669"/>
    <property type="project" value="UniProtKB-UniRule"/>
</dbReference>
<dbReference type="CDD" id="cd04451">
    <property type="entry name" value="S1_IF1"/>
    <property type="match status" value="1"/>
</dbReference>
<dbReference type="FunFam" id="2.40.50.140:FF:000002">
    <property type="entry name" value="Translation initiation factor IF-1"/>
    <property type="match status" value="1"/>
</dbReference>
<dbReference type="Gene3D" id="2.40.50.140">
    <property type="entry name" value="Nucleic acid-binding proteins"/>
    <property type="match status" value="1"/>
</dbReference>
<dbReference type="HAMAP" id="MF_00075">
    <property type="entry name" value="IF_1"/>
    <property type="match status" value="1"/>
</dbReference>
<dbReference type="InterPro" id="IPR012340">
    <property type="entry name" value="NA-bd_OB-fold"/>
</dbReference>
<dbReference type="InterPro" id="IPR006196">
    <property type="entry name" value="RNA-binding_domain_S1_IF1"/>
</dbReference>
<dbReference type="InterPro" id="IPR003029">
    <property type="entry name" value="S1_domain"/>
</dbReference>
<dbReference type="InterPro" id="IPR004368">
    <property type="entry name" value="TIF_IF1"/>
</dbReference>
<dbReference type="NCBIfam" id="TIGR00008">
    <property type="entry name" value="infA"/>
    <property type="match status" value="1"/>
</dbReference>
<dbReference type="PANTHER" id="PTHR33370">
    <property type="entry name" value="TRANSLATION INITIATION FACTOR IF-1, CHLOROPLASTIC"/>
    <property type="match status" value="1"/>
</dbReference>
<dbReference type="PANTHER" id="PTHR33370:SF1">
    <property type="entry name" value="TRANSLATION INITIATION FACTOR IF-1, CHLOROPLASTIC"/>
    <property type="match status" value="1"/>
</dbReference>
<dbReference type="Pfam" id="PF01176">
    <property type="entry name" value="eIF-1a"/>
    <property type="match status" value="1"/>
</dbReference>
<dbReference type="SMART" id="SM00316">
    <property type="entry name" value="S1"/>
    <property type="match status" value="1"/>
</dbReference>
<dbReference type="SUPFAM" id="SSF50249">
    <property type="entry name" value="Nucleic acid-binding proteins"/>
    <property type="match status" value="1"/>
</dbReference>
<dbReference type="PROSITE" id="PS50832">
    <property type="entry name" value="S1_IF1_TYPE"/>
    <property type="match status" value="1"/>
</dbReference>
<protein>
    <recommendedName>
        <fullName evidence="1">Translation initiation factor IF-1</fullName>
    </recommendedName>
</protein>
<keyword id="KW-0963">Cytoplasm</keyword>
<keyword id="KW-0396">Initiation factor</keyword>
<keyword id="KW-0648">Protein biosynthesis</keyword>
<keyword id="KW-0694">RNA-binding</keyword>
<keyword id="KW-0699">rRNA-binding</keyword>